<keyword id="KW-0240">DNA-directed RNA polymerase</keyword>
<keyword id="KW-0539">Nucleus</keyword>
<keyword id="KW-1185">Reference proteome</keyword>
<keyword id="KW-0804">Transcription</keyword>
<keyword id="KW-0862">Zinc</keyword>
<gene>
    <name type="primary">rpc-82</name>
    <name type="synonym">rpc-3</name>
    <name type="ORF">B7N14.090</name>
    <name type="ORF">NCU03560</name>
</gene>
<accession>Q8WZW7</accession>
<evidence type="ECO:0000250" key="1"/>
<evidence type="ECO:0000256" key="2">
    <source>
        <dbReference type="SAM" id="MobiDB-lite"/>
    </source>
</evidence>
<evidence type="ECO:0000305" key="3"/>
<sequence>MAVIKEKAECCTLLVDELYGQLPARVYATLFQRGKLSVRLISQFSKLSARQVKNGLCVLQQHNLLFYSVDANSGEAEYSVNHEYAYNLVRTGKILEMVDNSYGPAGRDVMQNLLLLGQTRISDLVAAYQAKINEVNNDDAWLNDKKPELAIKSKAQLNSVLCRLIEAELIDVIHSKTFQSAHEIEKQVHREVMDVYFSNGIKGTKAKIEFEQRVAEGLRKVREESKTLKRKLAQNGGASKRRKLAVGNETNGAPEEEEDLDPALDPRQVIRINYEKCIVELRSRRLVQYVNETLGETTGYVYGQLLKQLTKNISRCKSDPLIDALTPEEKVTPSVTTNEILDKVKTSIDLTLGIGKIPSKSISKSAAERLTPLAPKDKIPFMNQDDSDDDEEDGDYSDSDEEMDTKKENGDAPVARMSRPEQLRQHLLLLAEGHPGFVRHCGEDEWTVDFKPLMENLRATELDSIIEQTSGRQGLRLIRILRTKGKLGEQALQSLSLMRKVDLQQKMLEMRLVGFAHTQEVPRDNKADPKKSIFLWYCDTEQAYSSLIAKCYATMVHCLQVLEVRRQKDKDVLSLAKRTNVKGKEKDMMRDESYARFAKFLKDERLLMAEMMRIDDTLALLQDY</sequence>
<feature type="chain" id="PRO_0000351038" description="DNA-directed RNA polymerase III subunit rpc-3">
    <location>
        <begin position="1"/>
        <end position="624"/>
    </location>
</feature>
<feature type="region of interest" description="Disordered" evidence="2">
    <location>
        <begin position="229"/>
        <end position="260"/>
    </location>
</feature>
<feature type="region of interest" description="Disordered" evidence="2">
    <location>
        <begin position="373"/>
        <end position="418"/>
    </location>
</feature>
<feature type="region of interest" description="Leucine-zipper">
    <location>
        <begin position="551"/>
        <end position="572"/>
    </location>
</feature>
<feature type="compositionally biased region" description="Acidic residues" evidence="2">
    <location>
        <begin position="385"/>
        <end position="403"/>
    </location>
</feature>
<proteinExistence type="inferred from homology"/>
<name>RPC3_NEUCR</name>
<organism>
    <name type="scientific">Neurospora crassa (strain ATCC 24698 / 74-OR23-1A / CBS 708.71 / DSM 1257 / FGSC 987)</name>
    <dbReference type="NCBI Taxonomy" id="367110"/>
    <lineage>
        <taxon>Eukaryota</taxon>
        <taxon>Fungi</taxon>
        <taxon>Dikarya</taxon>
        <taxon>Ascomycota</taxon>
        <taxon>Pezizomycotina</taxon>
        <taxon>Sordariomycetes</taxon>
        <taxon>Sordariomycetidae</taxon>
        <taxon>Sordariales</taxon>
        <taxon>Sordariaceae</taxon>
        <taxon>Neurospora</taxon>
    </lineage>
</organism>
<reference key="1">
    <citation type="journal article" date="2003" name="Nucleic Acids Res.">
        <title>What's in the genome of a filamentous fungus? Analysis of the Neurospora genome sequence.</title>
        <authorList>
            <person name="Mannhaupt G."/>
            <person name="Montrone C."/>
            <person name="Haase D."/>
            <person name="Mewes H.-W."/>
            <person name="Aign V."/>
            <person name="Hoheisel J.D."/>
            <person name="Fartmann B."/>
            <person name="Nyakatura G."/>
            <person name="Kempken F."/>
            <person name="Maier J."/>
            <person name="Schulte U."/>
        </authorList>
    </citation>
    <scope>NUCLEOTIDE SEQUENCE [LARGE SCALE GENOMIC DNA]</scope>
    <source>
        <strain>ATCC 24698 / 74-OR23-1A / CBS 708.71 / DSM 1257 / FGSC 987</strain>
    </source>
</reference>
<reference key="2">
    <citation type="journal article" date="2003" name="Nature">
        <title>The genome sequence of the filamentous fungus Neurospora crassa.</title>
        <authorList>
            <person name="Galagan J.E."/>
            <person name="Calvo S.E."/>
            <person name="Borkovich K.A."/>
            <person name="Selker E.U."/>
            <person name="Read N.D."/>
            <person name="Jaffe D.B."/>
            <person name="FitzHugh W."/>
            <person name="Ma L.-J."/>
            <person name="Smirnov S."/>
            <person name="Purcell S."/>
            <person name="Rehman B."/>
            <person name="Elkins T."/>
            <person name="Engels R."/>
            <person name="Wang S."/>
            <person name="Nielsen C.B."/>
            <person name="Butler J."/>
            <person name="Endrizzi M."/>
            <person name="Qui D."/>
            <person name="Ianakiev P."/>
            <person name="Bell-Pedersen D."/>
            <person name="Nelson M.A."/>
            <person name="Werner-Washburne M."/>
            <person name="Selitrennikoff C.P."/>
            <person name="Kinsey J.A."/>
            <person name="Braun E.L."/>
            <person name="Zelter A."/>
            <person name="Schulte U."/>
            <person name="Kothe G.O."/>
            <person name="Jedd G."/>
            <person name="Mewes H.-W."/>
            <person name="Staben C."/>
            <person name="Marcotte E."/>
            <person name="Greenberg D."/>
            <person name="Roy A."/>
            <person name="Foley K."/>
            <person name="Naylor J."/>
            <person name="Stange-Thomann N."/>
            <person name="Barrett R."/>
            <person name="Gnerre S."/>
            <person name="Kamal M."/>
            <person name="Kamvysselis M."/>
            <person name="Mauceli E.W."/>
            <person name="Bielke C."/>
            <person name="Rudd S."/>
            <person name="Frishman D."/>
            <person name="Krystofova S."/>
            <person name="Rasmussen C."/>
            <person name="Metzenberg R.L."/>
            <person name="Perkins D.D."/>
            <person name="Kroken S."/>
            <person name="Cogoni C."/>
            <person name="Macino G."/>
            <person name="Catcheside D.E.A."/>
            <person name="Li W."/>
            <person name="Pratt R.J."/>
            <person name="Osmani S.A."/>
            <person name="DeSouza C.P.C."/>
            <person name="Glass N.L."/>
            <person name="Orbach M.J."/>
            <person name="Berglund J.A."/>
            <person name="Voelker R."/>
            <person name="Yarden O."/>
            <person name="Plamann M."/>
            <person name="Seiler S."/>
            <person name="Dunlap J.C."/>
            <person name="Radford A."/>
            <person name="Aramayo R."/>
            <person name="Natvig D.O."/>
            <person name="Alex L.A."/>
            <person name="Mannhaupt G."/>
            <person name="Ebbole D.J."/>
            <person name="Freitag M."/>
            <person name="Paulsen I."/>
            <person name="Sachs M.S."/>
            <person name="Lander E.S."/>
            <person name="Nusbaum C."/>
            <person name="Birren B.W."/>
        </authorList>
    </citation>
    <scope>NUCLEOTIDE SEQUENCE [LARGE SCALE GENOMIC DNA]</scope>
    <source>
        <strain>ATCC 24698 / 74-OR23-1A / CBS 708.71 / DSM 1257 / FGSC 987</strain>
    </source>
</reference>
<comment type="function">
    <text evidence="1">DNA-dependent RNA polymerase catalyzes the transcription of DNA into RNA using the four ribonucleoside triphosphates as substrates. Specific core component of RNA polymerase III which synthesizes small RNAs, such as 5S rRNA and tRNAs (By similarity).</text>
</comment>
<comment type="subunit">
    <text evidence="1">Component of the RNA polymerase III (Pol III) complex consisting of 17 subunits.</text>
</comment>
<comment type="subcellular location">
    <subcellularLocation>
        <location evidence="1">Nucleus</location>
    </subcellularLocation>
</comment>
<comment type="similarity">
    <text evidence="3">Belongs to the RNA polymerase beta chain family.</text>
</comment>
<protein>
    <recommendedName>
        <fullName>DNA-directed RNA polymerase III subunit rpc-3</fullName>
        <shortName>RNA polymerase III subunit C3</shortName>
    </recommendedName>
</protein>
<dbReference type="EMBL" id="AL669986">
    <property type="protein sequence ID" value="CAD21045.1"/>
    <property type="molecule type" value="Genomic_DNA"/>
</dbReference>
<dbReference type="EMBL" id="CM002237">
    <property type="protein sequence ID" value="EAA26887.1"/>
    <property type="molecule type" value="Genomic_DNA"/>
</dbReference>
<dbReference type="RefSeq" id="XP_956123.1">
    <property type="nucleotide sequence ID" value="XM_951030.2"/>
</dbReference>
<dbReference type="SMR" id="Q8WZW7"/>
<dbReference type="FunCoup" id="Q8WZW7">
    <property type="interactions" value="438"/>
</dbReference>
<dbReference type="STRING" id="367110.Q8WZW7"/>
<dbReference type="PaxDb" id="5141-EFNCRP00000002678"/>
<dbReference type="EnsemblFungi" id="EAA26887">
    <property type="protein sequence ID" value="EAA26887"/>
    <property type="gene ID" value="NCU03560"/>
</dbReference>
<dbReference type="GeneID" id="3872278"/>
<dbReference type="KEGG" id="ncr:NCU03560"/>
<dbReference type="VEuPathDB" id="FungiDB:NCU03560"/>
<dbReference type="HOGENOM" id="CLU_023294_0_0_1"/>
<dbReference type="InParanoid" id="Q8WZW7"/>
<dbReference type="OMA" id="KHRFVRH"/>
<dbReference type="OrthoDB" id="272392at2759"/>
<dbReference type="Proteomes" id="UP000001805">
    <property type="component" value="Chromosome 6, Linkage Group II"/>
</dbReference>
<dbReference type="GO" id="GO:0005666">
    <property type="term" value="C:RNA polymerase III complex"/>
    <property type="evidence" value="ECO:0000318"/>
    <property type="project" value="GO_Central"/>
</dbReference>
<dbReference type="GO" id="GO:0003697">
    <property type="term" value="F:single-stranded DNA binding"/>
    <property type="evidence" value="ECO:0007669"/>
    <property type="project" value="InterPro"/>
</dbReference>
<dbReference type="GO" id="GO:0006351">
    <property type="term" value="P:DNA-templated transcription"/>
    <property type="evidence" value="ECO:0007669"/>
    <property type="project" value="InterPro"/>
</dbReference>
<dbReference type="Gene3D" id="1.10.10.10">
    <property type="entry name" value="Winged helix-like DNA-binding domain superfamily/Winged helix DNA-binding domain"/>
    <property type="match status" value="3"/>
</dbReference>
<dbReference type="InterPro" id="IPR055207">
    <property type="entry name" value="POLR3C_WHD"/>
</dbReference>
<dbReference type="InterPro" id="IPR013197">
    <property type="entry name" value="RNA_pol_III_RPC82-rel_HTH"/>
</dbReference>
<dbReference type="InterPro" id="IPR008806">
    <property type="entry name" value="RNA_pol_III_Rpc82_C"/>
</dbReference>
<dbReference type="InterPro" id="IPR039748">
    <property type="entry name" value="RPC3"/>
</dbReference>
<dbReference type="InterPro" id="IPR036388">
    <property type="entry name" value="WH-like_DNA-bd_sf"/>
</dbReference>
<dbReference type="PANTHER" id="PTHR12949:SF0">
    <property type="entry name" value="DNA-DIRECTED RNA POLYMERASE III SUBUNIT RPC3"/>
    <property type="match status" value="1"/>
</dbReference>
<dbReference type="PANTHER" id="PTHR12949">
    <property type="entry name" value="RNA POLYMERASE III DNA DIRECTED -RELATED"/>
    <property type="match status" value="1"/>
</dbReference>
<dbReference type="Pfam" id="PF08221">
    <property type="entry name" value="HTH_9"/>
    <property type="match status" value="1"/>
</dbReference>
<dbReference type="Pfam" id="PF22536">
    <property type="entry name" value="POLR3C_WHD"/>
    <property type="match status" value="1"/>
</dbReference>
<dbReference type="Pfam" id="PF05645">
    <property type="entry name" value="RNA_pol_Rpc82"/>
    <property type="match status" value="1"/>
</dbReference>